<name>HIS3_GEODF</name>
<feature type="chain" id="PRO_1000149072" description="Phosphoribosyl-AMP cyclohydrolase">
    <location>
        <begin position="1"/>
        <end position="126"/>
    </location>
</feature>
<feature type="binding site" evidence="1">
    <location>
        <position position="74"/>
    </location>
    <ligand>
        <name>Mg(2+)</name>
        <dbReference type="ChEBI" id="CHEBI:18420"/>
    </ligand>
</feature>
<feature type="binding site" evidence="1">
    <location>
        <position position="75"/>
    </location>
    <ligand>
        <name>Zn(2+)</name>
        <dbReference type="ChEBI" id="CHEBI:29105"/>
        <note>ligand shared between dimeric partners</note>
    </ligand>
</feature>
<feature type="binding site" evidence="1">
    <location>
        <position position="76"/>
    </location>
    <ligand>
        <name>Mg(2+)</name>
        <dbReference type="ChEBI" id="CHEBI:18420"/>
    </ligand>
</feature>
<feature type="binding site" evidence="1">
    <location>
        <position position="78"/>
    </location>
    <ligand>
        <name>Mg(2+)</name>
        <dbReference type="ChEBI" id="CHEBI:18420"/>
    </ligand>
</feature>
<feature type="binding site" evidence="1">
    <location>
        <position position="92"/>
    </location>
    <ligand>
        <name>Zn(2+)</name>
        <dbReference type="ChEBI" id="CHEBI:29105"/>
        <note>ligand shared between dimeric partners</note>
    </ligand>
</feature>
<feature type="binding site" evidence="1">
    <location>
        <position position="99"/>
    </location>
    <ligand>
        <name>Zn(2+)</name>
        <dbReference type="ChEBI" id="CHEBI:29105"/>
        <note>ligand shared between dimeric partners</note>
    </ligand>
</feature>
<proteinExistence type="inferred from homology"/>
<protein>
    <recommendedName>
        <fullName evidence="1">Phosphoribosyl-AMP cyclohydrolase</fullName>
        <shortName evidence="1">PRA-CH</shortName>
        <ecNumber evidence="1">3.5.4.19</ecNumber>
    </recommendedName>
</protein>
<organism>
    <name type="scientific">Geotalea daltonii (strain DSM 22248 / JCM 15807 / FRC-32)</name>
    <name type="common">Geobacter daltonii</name>
    <dbReference type="NCBI Taxonomy" id="316067"/>
    <lineage>
        <taxon>Bacteria</taxon>
        <taxon>Pseudomonadati</taxon>
        <taxon>Thermodesulfobacteriota</taxon>
        <taxon>Desulfuromonadia</taxon>
        <taxon>Geobacterales</taxon>
        <taxon>Geobacteraceae</taxon>
        <taxon>Geotalea</taxon>
    </lineage>
</organism>
<comment type="function">
    <text evidence="1">Catalyzes the hydrolysis of the adenine ring of phosphoribosyl-AMP.</text>
</comment>
<comment type="catalytic activity">
    <reaction evidence="1">
        <text>1-(5-phospho-beta-D-ribosyl)-5'-AMP + H2O = 1-(5-phospho-beta-D-ribosyl)-5-[(5-phospho-beta-D-ribosylamino)methylideneamino]imidazole-4-carboxamide</text>
        <dbReference type="Rhea" id="RHEA:20049"/>
        <dbReference type="ChEBI" id="CHEBI:15377"/>
        <dbReference type="ChEBI" id="CHEBI:58435"/>
        <dbReference type="ChEBI" id="CHEBI:59457"/>
        <dbReference type="EC" id="3.5.4.19"/>
    </reaction>
</comment>
<comment type="cofactor">
    <cofactor evidence="1">
        <name>Mg(2+)</name>
        <dbReference type="ChEBI" id="CHEBI:18420"/>
    </cofactor>
    <text evidence="1">Binds 1 Mg(2+) ion per subunit.</text>
</comment>
<comment type="cofactor">
    <cofactor evidence="1">
        <name>Zn(2+)</name>
        <dbReference type="ChEBI" id="CHEBI:29105"/>
    </cofactor>
    <text evidence="1">Binds 1 zinc ion per subunit.</text>
</comment>
<comment type="pathway">
    <text evidence="1">Amino-acid biosynthesis; L-histidine biosynthesis; L-histidine from 5-phospho-alpha-D-ribose 1-diphosphate: step 3/9.</text>
</comment>
<comment type="subunit">
    <text evidence="1">Homodimer.</text>
</comment>
<comment type="subcellular location">
    <subcellularLocation>
        <location evidence="1">Cytoplasm</location>
    </subcellularLocation>
</comment>
<comment type="similarity">
    <text evidence="1">Belongs to the PRA-CH family.</text>
</comment>
<sequence length="126" mass="14435">MIKIDFDKMGGLIPAVIQDYQSGEVLMVAFMDQKTLDLTLKDGKTWFFSRTRNKYWMKGEESGNTQEVMEVLTDCDADTVVIKVKQNGPAACHTGNRSCFYVKWEDGQWVEHSNPLFDPNEVYKKG</sequence>
<dbReference type="EC" id="3.5.4.19" evidence="1"/>
<dbReference type="EMBL" id="CP001390">
    <property type="protein sequence ID" value="ACM20442.1"/>
    <property type="molecule type" value="Genomic_DNA"/>
</dbReference>
<dbReference type="RefSeq" id="WP_012647171.1">
    <property type="nucleotide sequence ID" value="NC_011979.1"/>
</dbReference>
<dbReference type="SMR" id="B9M8U6"/>
<dbReference type="STRING" id="316067.Geob_2087"/>
<dbReference type="KEGG" id="geo:Geob_2087"/>
<dbReference type="eggNOG" id="COG0139">
    <property type="taxonomic scope" value="Bacteria"/>
</dbReference>
<dbReference type="HOGENOM" id="CLU_048577_5_0_7"/>
<dbReference type="OrthoDB" id="9795769at2"/>
<dbReference type="UniPathway" id="UPA00031">
    <property type="reaction ID" value="UER00008"/>
</dbReference>
<dbReference type="Proteomes" id="UP000007721">
    <property type="component" value="Chromosome"/>
</dbReference>
<dbReference type="GO" id="GO:0005737">
    <property type="term" value="C:cytoplasm"/>
    <property type="evidence" value="ECO:0007669"/>
    <property type="project" value="UniProtKB-SubCell"/>
</dbReference>
<dbReference type="GO" id="GO:0000287">
    <property type="term" value="F:magnesium ion binding"/>
    <property type="evidence" value="ECO:0007669"/>
    <property type="project" value="UniProtKB-UniRule"/>
</dbReference>
<dbReference type="GO" id="GO:0004635">
    <property type="term" value="F:phosphoribosyl-AMP cyclohydrolase activity"/>
    <property type="evidence" value="ECO:0007669"/>
    <property type="project" value="UniProtKB-UniRule"/>
</dbReference>
<dbReference type="GO" id="GO:0008270">
    <property type="term" value="F:zinc ion binding"/>
    <property type="evidence" value="ECO:0007669"/>
    <property type="project" value="UniProtKB-UniRule"/>
</dbReference>
<dbReference type="GO" id="GO:0000105">
    <property type="term" value="P:L-histidine biosynthetic process"/>
    <property type="evidence" value="ECO:0007669"/>
    <property type="project" value="UniProtKB-UniRule"/>
</dbReference>
<dbReference type="FunFam" id="3.10.20.810:FF:000001">
    <property type="entry name" value="Histidine biosynthesis bifunctional protein HisIE"/>
    <property type="match status" value="1"/>
</dbReference>
<dbReference type="Gene3D" id="3.10.20.810">
    <property type="entry name" value="Phosphoribosyl-AMP cyclohydrolase"/>
    <property type="match status" value="1"/>
</dbReference>
<dbReference type="HAMAP" id="MF_01021">
    <property type="entry name" value="HisI"/>
    <property type="match status" value="1"/>
</dbReference>
<dbReference type="InterPro" id="IPR026660">
    <property type="entry name" value="PRA-CH"/>
</dbReference>
<dbReference type="InterPro" id="IPR002496">
    <property type="entry name" value="PRib_AMP_CycHydrolase_dom"/>
</dbReference>
<dbReference type="InterPro" id="IPR038019">
    <property type="entry name" value="PRib_AMP_CycHydrolase_sf"/>
</dbReference>
<dbReference type="NCBIfam" id="NF000768">
    <property type="entry name" value="PRK00051.1"/>
    <property type="match status" value="1"/>
</dbReference>
<dbReference type="PANTHER" id="PTHR42945">
    <property type="entry name" value="HISTIDINE BIOSYNTHESIS BIFUNCTIONAL PROTEIN"/>
    <property type="match status" value="1"/>
</dbReference>
<dbReference type="PANTHER" id="PTHR42945:SF1">
    <property type="entry name" value="HISTIDINE BIOSYNTHESIS BIFUNCTIONAL PROTEIN HIS7"/>
    <property type="match status" value="1"/>
</dbReference>
<dbReference type="Pfam" id="PF01502">
    <property type="entry name" value="PRA-CH"/>
    <property type="match status" value="1"/>
</dbReference>
<dbReference type="SUPFAM" id="SSF141734">
    <property type="entry name" value="HisI-like"/>
    <property type="match status" value="1"/>
</dbReference>
<gene>
    <name evidence="1" type="primary">hisI</name>
    <name type="ordered locus">Geob_2087</name>
</gene>
<reference key="1">
    <citation type="submission" date="2009-01" db="EMBL/GenBank/DDBJ databases">
        <title>Complete sequence of Geobacter sp. FRC-32.</title>
        <authorList>
            <consortium name="US DOE Joint Genome Institute"/>
            <person name="Lucas S."/>
            <person name="Copeland A."/>
            <person name="Lapidus A."/>
            <person name="Glavina del Rio T."/>
            <person name="Dalin E."/>
            <person name="Tice H."/>
            <person name="Bruce D."/>
            <person name="Goodwin L."/>
            <person name="Pitluck S."/>
            <person name="Saunders E."/>
            <person name="Brettin T."/>
            <person name="Detter J.C."/>
            <person name="Han C."/>
            <person name="Larimer F."/>
            <person name="Land M."/>
            <person name="Hauser L."/>
            <person name="Kyrpides N."/>
            <person name="Ovchinnikova G."/>
            <person name="Kostka J."/>
            <person name="Richardson P."/>
        </authorList>
    </citation>
    <scope>NUCLEOTIDE SEQUENCE [LARGE SCALE GENOMIC DNA]</scope>
    <source>
        <strain>DSM 22248 / JCM 15807 / FRC-32</strain>
    </source>
</reference>
<keyword id="KW-0028">Amino-acid biosynthesis</keyword>
<keyword id="KW-0963">Cytoplasm</keyword>
<keyword id="KW-0368">Histidine biosynthesis</keyword>
<keyword id="KW-0378">Hydrolase</keyword>
<keyword id="KW-0460">Magnesium</keyword>
<keyword id="KW-0479">Metal-binding</keyword>
<keyword id="KW-1185">Reference proteome</keyword>
<keyword id="KW-0862">Zinc</keyword>
<accession>B9M8U6</accession>
<evidence type="ECO:0000255" key="1">
    <source>
        <dbReference type="HAMAP-Rule" id="MF_01021"/>
    </source>
</evidence>